<protein>
    <recommendedName>
        <fullName evidence="1">Protein translocase subunit SecA</fullName>
        <ecNumber evidence="1">7.4.2.8</ecNumber>
    </recommendedName>
</protein>
<evidence type="ECO:0000255" key="1">
    <source>
        <dbReference type="HAMAP-Rule" id="MF_01382"/>
    </source>
</evidence>
<evidence type="ECO:0000256" key="2">
    <source>
        <dbReference type="SAM" id="MobiDB-lite"/>
    </source>
</evidence>
<reference key="1">
    <citation type="journal article" date="2009" name="Stand. Genomic Sci.">
        <title>Complete genome sequence of Beutenbergia cavernae type strain (HKI 0122).</title>
        <authorList>
            <person name="Land M."/>
            <person name="Pukall R."/>
            <person name="Abt B."/>
            <person name="Goker M."/>
            <person name="Rohde M."/>
            <person name="Glavina Del Rio T."/>
            <person name="Tice H."/>
            <person name="Copeland A."/>
            <person name="Cheng J.F."/>
            <person name="Lucas S."/>
            <person name="Chen F."/>
            <person name="Nolan M."/>
            <person name="Bruce D."/>
            <person name="Goodwin L."/>
            <person name="Pitluck S."/>
            <person name="Ivanova N."/>
            <person name="Mavromatis K."/>
            <person name="Ovchinnikova G."/>
            <person name="Pati A."/>
            <person name="Chen A."/>
            <person name="Palaniappan K."/>
            <person name="Hauser L."/>
            <person name="Chang Y.J."/>
            <person name="Jefferies C.C."/>
            <person name="Saunders E."/>
            <person name="Brettin T."/>
            <person name="Detter J.C."/>
            <person name="Han C."/>
            <person name="Chain P."/>
            <person name="Bristow J."/>
            <person name="Eisen J.A."/>
            <person name="Markowitz V."/>
            <person name="Hugenholtz P."/>
            <person name="Kyrpides N.C."/>
            <person name="Klenk H.P."/>
            <person name="Lapidus A."/>
        </authorList>
    </citation>
    <scope>NUCLEOTIDE SEQUENCE [LARGE SCALE GENOMIC DNA]</scope>
    <source>
        <strain>ATCC BAA-8 / DSM 12333 / CCUG 43141 / JCM 11478 / NBRC 16432 / NCIMB 13614 / HKI 0122</strain>
    </source>
</reference>
<keyword id="KW-0067">ATP-binding</keyword>
<keyword id="KW-1003">Cell membrane</keyword>
<keyword id="KW-0963">Cytoplasm</keyword>
<keyword id="KW-0472">Membrane</keyword>
<keyword id="KW-0547">Nucleotide-binding</keyword>
<keyword id="KW-0653">Protein transport</keyword>
<keyword id="KW-1185">Reference proteome</keyword>
<keyword id="KW-1278">Translocase</keyword>
<keyword id="KW-0811">Translocation</keyword>
<keyword id="KW-0813">Transport</keyword>
<sequence length="968" mass="106061">MPSILDKVLRMGEGRILKKLTGIVAQVNAHEDTVREFTDAELREETDVFKARLADGETLEAILPEAFATVREAARRTLGQRPHDVQVMGGAALHLGNIAEMKTGEGKTLAATLPAYLNALSGDGVHVVTVNDYLAQYQSDLMGRVYRFLGLTTGCILSGQKPEERRRHYAADITYGTNNELGFDYLRDNMAWSSGELVQRGHNFVIVDEVDSILIDEARTPLIISGPASGDANKWYAEFARVARRLTRESDYEVDEKKRNVGVLEPGIEKVEDYLGIDNLYESLNTPLIGFLNNAIKAKELFKRDKDYVVLKGEVLIVDEHTGRILAGRRYNEGMHQAIEAKEGVAIKAENQTLATITLQNYFRLYGKLAGMTGTAMTEAAEFQGTYKVGVVPIPTNMPMARLDKPDLVFKNEDGKFDAVVEDIVERHAAGQPVLVGTTSVEKSELLSTKLKRQGVPHEVLNAKQHAREASIVAMAGRKGAVTVATNMAGRGTDIMLGGNAEHLAIATLAEQGLDPNETPEEYEAAWPDALEEATTSVAAEHDEVVDLGGLYVLGTERHESRRIDNQLRGRSGRQGDPGESRFYLSMGDDLMRLFNSGLAERFMGSSAYPDDMPLESKLVTRGIASAQGQVEARNFEIRKNVLKYDDVLSRQRAVIYTDRRRVLEGEDLAEQVQGFLTDVVTAYIESATQAGAPESWDLDELWTALKAVYPISITPEEVVSEAGNATRVTPEMLTREILSDAEHAYARREEELTPDVMRQLERRVVLAVLDRKWREHLYEMDYLKEGIGLRAMAQRDPLVEYQREGFQLFSAMRDAIKEEAVGYLFNLEVKRPEPAESAEESTDGAPVVPAVPTGSDGEPLAPEQEAVPAGEPERPAKRRPAARVATRPAAEVDPLGLDTPERPAALQYSAPSSDGGSSFSEGRVVRSEGGTSGGSARPAAGASSGGGGGGANREARRRAAKAAKKRR</sequence>
<name>SECA_BEUC1</name>
<gene>
    <name evidence="1" type="primary">secA</name>
    <name type="ordered locus">Bcav_1246</name>
</gene>
<proteinExistence type="inferred from homology"/>
<feature type="chain" id="PRO_1000215100" description="Protein translocase subunit SecA">
    <location>
        <begin position="1"/>
        <end position="968"/>
    </location>
</feature>
<feature type="region of interest" description="Disordered" evidence="2">
    <location>
        <begin position="835"/>
        <end position="968"/>
    </location>
</feature>
<feature type="compositionally biased region" description="Low complexity" evidence="2">
    <location>
        <begin position="883"/>
        <end position="892"/>
    </location>
</feature>
<feature type="compositionally biased region" description="Low complexity" evidence="2">
    <location>
        <begin position="910"/>
        <end position="923"/>
    </location>
</feature>
<feature type="compositionally biased region" description="Basic residues" evidence="2">
    <location>
        <begin position="956"/>
        <end position="968"/>
    </location>
</feature>
<feature type="binding site" evidence="1">
    <location>
        <position position="86"/>
    </location>
    <ligand>
        <name>ATP</name>
        <dbReference type="ChEBI" id="CHEBI:30616"/>
    </ligand>
</feature>
<feature type="binding site" evidence="1">
    <location>
        <begin position="104"/>
        <end position="108"/>
    </location>
    <ligand>
        <name>ATP</name>
        <dbReference type="ChEBI" id="CHEBI:30616"/>
    </ligand>
</feature>
<feature type="binding site" evidence="1">
    <location>
        <position position="494"/>
    </location>
    <ligand>
        <name>ATP</name>
        <dbReference type="ChEBI" id="CHEBI:30616"/>
    </ligand>
</feature>
<comment type="function">
    <text evidence="1">Part of the Sec protein translocase complex. Interacts with the SecYEG preprotein conducting channel. Has a central role in coupling the hydrolysis of ATP to the transfer of proteins into and across the cell membrane, serving as an ATP-driven molecular motor driving the stepwise translocation of polypeptide chains across the membrane.</text>
</comment>
<comment type="catalytic activity">
    <reaction evidence="1">
        <text>ATP + H2O + cellular proteinSide 1 = ADP + phosphate + cellular proteinSide 2.</text>
        <dbReference type="EC" id="7.4.2.8"/>
    </reaction>
</comment>
<comment type="subunit">
    <text evidence="1">Monomer and homodimer. Part of the essential Sec protein translocation apparatus which comprises SecA, SecYEG and auxiliary proteins SecDF. Other proteins may also be involved.</text>
</comment>
<comment type="subcellular location">
    <subcellularLocation>
        <location evidence="1">Cell membrane</location>
        <topology evidence="1">Peripheral membrane protein</topology>
        <orientation evidence="1">Cytoplasmic side</orientation>
    </subcellularLocation>
    <subcellularLocation>
        <location evidence="1">Cytoplasm</location>
    </subcellularLocation>
    <text evidence="1">Distribution is 50-50.</text>
</comment>
<comment type="similarity">
    <text evidence="1">Belongs to the SecA family.</text>
</comment>
<accession>C5C1N8</accession>
<organism>
    <name type="scientific">Beutenbergia cavernae (strain ATCC BAA-8 / DSM 12333 / CCUG 43141 / JCM 11478 / NBRC 16432 / NCIMB 13614 / HKI 0122)</name>
    <dbReference type="NCBI Taxonomy" id="471853"/>
    <lineage>
        <taxon>Bacteria</taxon>
        <taxon>Bacillati</taxon>
        <taxon>Actinomycetota</taxon>
        <taxon>Actinomycetes</taxon>
        <taxon>Micrococcales</taxon>
        <taxon>Beutenbergiaceae</taxon>
        <taxon>Beutenbergia</taxon>
    </lineage>
</organism>
<dbReference type="EC" id="7.4.2.8" evidence="1"/>
<dbReference type="EMBL" id="CP001618">
    <property type="protein sequence ID" value="ACQ79506.1"/>
    <property type="molecule type" value="Genomic_DNA"/>
</dbReference>
<dbReference type="RefSeq" id="WP_015881746.1">
    <property type="nucleotide sequence ID" value="NC_012669.1"/>
</dbReference>
<dbReference type="SMR" id="C5C1N8"/>
<dbReference type="STRING" id="471853.Bcav_1246"/>
<dbReference type="KEGG" id="bcv:Bcav_1246"/>
<dbReference type="eggNOG" id="COG0653">
    <property type="taxonomic scope" value="Bacteria"/>
</dbReference>
<dbReference type="HOGENOM" id="CLU_005314_3_0_11"/>
<dbReference type="OrthoDB" id="9805579at2"/>
<dbReference type="Proteomes" id="UP000007962">
    <property type="component" value="Chromosome"/>
</dbReference>
<dbReference type="GO" id="GO:0031522">
    <property type="term" value="C:cell envelope Sec protein transport complex"/>
    <property type="evidence" value="ECO:0007669"/>
    <property type="project" value="TreeGrafter"/>
</dbReference>
<dbReference type="GO" id="GO:0005829">
    <property type="term" value="C:cytosol"/>
    <property type="evidence" value="ECO:0007669"/>
    <property type="project" value="TreeGrafter"/>
</dbReference>
<dbReference type="GO" id="GO:0005886">
    <property type="term" value="C:plasma membrane"/>
    <property type="evidence" value="ECO:0007669"/>
    <property type="project" value="UniProtKB-SubCell"/>
</dbReference>
<dbReference type="GO" id="GO:0005524">
    <property type="term" value="F:ATP binding"/>
    <property type="evidence" value="ECO:0007669"/>
    <property type="project" value="UniProtKB-UniRule"/>
</dbReference>
<dbReference type="GO" id="GO:0008564">
    <property type="term" value="F:protein-exporting ATPase activity"/>
    <property type="evidence" value="ECO:0007669"/>
    <property type="project" value="UniProtKB-EC"/>
</dbReference>
<dbReference type="GO" id="GO:0065002">
    <property type="term" value="P:intracellular protein transmembrane transport"/>
    <property type="evidence" value="ECO:0007669"/>
    <property type="project" value="UniProtKB-UniRule"/>
</dbReference>
<dbReference type="GO" id="GO:0017038">
    <property type="term" value="P:protein import"/>
    <property type="evidence" value="ECO:0007669"/>
    <property type="project" value="InterPro"/>
</dbReference>
<dbReference type="GO" id="GO:0006605">
    <property type="term" value="P:protein targeting"/>
    <property type="evidence" value="ECO:0007669"/>
    <property type="project" value="UniProtKB-UniRule"/>
</dbReference>
<dbReference type="GO" id="GO:0043952">
    <property type="term" value="P:protein transport by the Sec complex"/>
    <property type="evidence" value="ECO:0007669"/>
    <property type="project" value="TreeGrafter"/>
</dbReference>
<dbReference type="CDD" id="cd17928">
    <property type="entry name" value="DEXDc_SecA"/>
    <property type="match status" value="1"/>
</dbReference>
<dbReference type="CDD" id="cd18803">
    <property type="entry name" value="SF2_C_secA"/>
    <property type="match status" value="1"/>
</dbReference>
<dbReference type="FunFam" id="1.10.3060.10:FF:000002">
    <property type="entry name" value="Preprotein translocase subunit SecA"/>
    <property type="match status" value="1"/>
</dbReference>
<dbReference type="FunFam" id="3.40.50.300:FF:000113">
    <property type="entry name" value="Preprotein translocase subunit SecA"/>
    <property type="match status" value="1"/>
</dbReference>
<dbReference type="FunFam" id="3.40.50.300:FF:000334">
    <property type="entry name" value="Protein translocase subunit SecA"/>
    <property type="match status" value="1"/>
</dbReference>
<dbReference type="FunFam" id="3.90.1440.10:FF:000002">
    <property type="entry name" value="Protein translocase subunit SecA"/>
    <property type="match status" value="1"/>
</dbReference>
<dbReference type="Gene3D" id="1.10.3060.10">
    <property type="entry name" value="Helical scaffold and wing domains of SecA"/>
    <property type="match status" value="1"/>
</dbReference>
<dbReference type="Gene3D" id="3.40.50.300">
    <property type="entry name" value="P-loop containing nucleotide triphosphate hydrolases"/>
    <property type="match status" value="2"/>
</dbReference>
<dbReference type="Gene3D" id="3.90.1440.10">
    <property type="entry name" value="SecA, preprotein cross-linking domain"/>
    <property type="match status" value="1"/>
</dbReference>
<dbReference type="HAMAP" id="MF_01382">
    <property type="entry name" value="SecA"/>
    <property type="match status" value="1"/>
</dbReference>
<dbReference type="InterPro" id="IPR014001">
    <property type="entry name" value="Helicase_ATP-bd"/>
</dbReference>
<dbReference type="InterPro" id="IPR001650">
    <property type="entry name" value="Helicase_C-like"/>
</dbReference>
<dbReference type="InterPro" id="IPR027417">
    <property type="entry name" value="P-loop_NTPase"/>
</dbReference>
<dbReference type="InterPro" id="IPR000185">
    <property type="entry name" value="SecA"/>
</dbReference>
<dbReference type="InterPro" id="IPR020937">
    <property type="entry name" value="SecA_CS"/>
</dbReference>
<dbReference type="InterPro" id="IPR011115">
    <property type="entry name" value="SecA_DEAD"/>
</dbReference>
<dbReference type="InterPro" id="IPR014018">
    <property type="entry name" value="SecA_motor_DEAD"/>
</dbReference>
<dbReference type="InterPro" id="IPR011130">
    <property type="entry name" value="SecA_preprotein_X-link_dom"/>
</dbReference>
<dbReference type="InterPro" id="IPR044722">
    <property type="entry name" value="SecA_SF2_C"/>
</dbReference>
<dbReference type="InterPro" id="IPR011116">
    <property type="entry name" value="SecA_Wing/Scaffold"/>
</dbReference>
<dbReference type="InterPro" id="IPR036266">
    <property type="entry name" value="SecA_Wing/Scaffold_sf"/>
</dbReference>
<dbReference type="InterPro" id="IPR036670">
    <property type="entry name" value="SecA_X-link_sf"/>
</dbReference>
<dbReference type="NCBIfam" id="NF009538">
    <property type="entry name" value="PRK12904.1"/>
    <property type="match status" value="1"/>
</dbReference>
<dbReference type="NCBIfam" id="TIGR00963">
    <property type="entry name" value="secA"/>
    <property type="match status" value="1"/>
</dbReference>
<dbReference type="PANTHER" id="PTHR30612:SF0">
    <property type="entry name" value="CHLOROPLAST PROTEIN-TRANSPORTING ATPASE"/>
    <property type="match status" value="1"/>
</dbReference>
<dbReference type="PANTHER" id="PTHR30612">
    <property type="entry name" value="SECA INNER MEMBRANE COMPONENT OF SEC PROTEIN SECRETION SYSTEM"/>
    <property type="match status" value="1"/>
</dbReference>
<dbReference type="Pfam" id="PF21090">
    <property type="entry name" value="P-loop_SecA"/>
    <property type="match status" value="1"/>
</dbReference>
<dbReference type="Pfam" id="PF07517">
    <property type="entry name" value="SecA_DEAD"/>
    <property type="match status" value="1"/>
</dbReference>
<dbReference type="Pfam" id="PF01043">
    <property type="entry name" value="SecA_PP_bind"/>
    <property type="match status" value="1"/>
</dbReference>
<dbReference type="Pfam" id="PF07516">
    <property type="entry name" value="SecA_SW"/>
    <property type="match status" value="1"/>
</dbReference>
<dbReference type="PRINTS" id="PR00906">
    <property type="entry name" value="SECA"/>
</dbReference>
<dbReference type="SMART" id="SM00957">
    <property type="entry name" value="SecA_DEAD"/>
    <property type="match status" value="1"/>
</dbReference>
<dbReference type="SMART" id="SM00958">
    <property type="entry name" value="SecA_PP_bind"/>
    <property type="match status" value="1"/>
</dbReference>
<dbReference type="SUPFAM" id="SSF81886">
    <property type="entry name" value="Helical scaffold and wing domains of SecA"/>
    <property type="match status" value="1"/>
</dbReference>
<dbReference type="SUPFAM" id="SSF52540">
    <property type="entry name" value="P-loop containing nucleoside triphosphate hydrolases"/>
    <property type="match status" value="2"/>
</dbReference>
<dbReference type="SUPFAM" id="SSF81767">
    <property type="entry name" value="Pre-protein crosslinking domain of SecA"/>
    <property type="match status" value="1"/>
</dbReference>
<dbReference type="PROSITE" id="PS01312">
    <property type="entry name" value="SECA"/>
    <property type="match status" value="1"/>
</dbReference>
<dbReference type="PROSITE" id="PS51196">
    <property type="entry name" value="SECA_MOTOR_DEAD"/>
    <property type="match status" value="1"/>
</dbReference>